<name>PHS_RHOPT</name>
<organism>
    <name type="scientific">Rhodopseudomonas palustris (strain TIE-1)</name>
    <dbReference type="NCBI Taxonomy" id="395960"/>
    <lineage>
        <taxon>Bacteria</taxon>
        <taxon>Pseudomonadati</taxon>
        <taxon>Pseudomonadota</taxon>
        <taxon>Alphaproteobacteria</taxon>
        <taxon>Hyphomicrobiales</taxon>
        <taxon>Nitrobacteraceae</taxon>
        <taxon>Rhodopseudomonas</taxon>
    </lineage>
</organism>
<proteinExistence type="inferred from homology"/>
<keyword id="KW-0456">Lyase</keyword>
<comment type="catalytic activity">
    <reaction evidence="1">
        <text>(4aS,6R)-4a-hydroxy-L-erythro-5,6,7,8-tetrahydrobiopterin = (6R)-L-erythro-6,7-dihydrobiopterin + H2O</text>
        <dbReference type="Rhea" id="RHEA:11920"/>
        <dbReference type="ChEBI" id="CHEBI:15377"/>
        <dbReference type="ChEBI" id="CHEBI:15642"/>
        <dbReference type="ChEBI" id="CHEBI:43120"/>
        <dbReference type="EC" id="4.2.1.96"/>
    </reaction>
</comment>
<comment type="similarity">
    <text evidence="1">Belongs to the pterin-4-alpha-carbinolamine dehydratase family.</text>
</comment>
<accession>B3Q9E4</accession>
<reference key="1">
    <citation type="submission" date="2008-05" db="EMBL/GenBank/DDBJ databases">
        <title>Complete sequence of Rhodopseudomonas palustris TIE-1.</title>
        <authorList>
            <consortium name="US DOE Joint Genome Institute"/>
            <person name="Lucas S."/>
            <person name="Copeland A."/>
            <person name="Lapidus A."/>
            <person name="Glavina del Rio T."/>
            <person name="Dalin E."/>
            <person name="Tice H."/>
            <person name="Pitluck S."/>
            <person name="Chain P."/>
            <person name="Malfatti S."/>
            <person name="Shin M."/>
            <person name="Vergez L."/>
            <person name="Lang D."/>
            <person name="Schmutz J."/>
            <person name="Larimer F."/>
            <person name="Land M."/>
            <person name="Hauser L."/>
            <person name="Kyrpides N."/>
            <person name="Mikhailova N."/>
            <person name="Emerson D."/>
            <person name="Newman D.K."/>
            <person name="Roden E."/>
            <person name="Richardson P."/>
        </authorList>
    </citation>
    <scope>NUCLEOTIDE SEQUENCE [LARGE SCALE GENOMIC DNA]</scope>
    <source>
        <strain>TIE-1</strain>
    </source>
</reference>
<sequence>MNRLSASERQAALRELPGWLELEEREAIGRSYQFTDFSEAFGFMTRVALAAEKADHHPEWRNVYRTVDVVLTTHDAGGVTERDVKLAKAMDAIAERCGAR</sequence>
<feature type="chain" id="PRO_1000192932" description="Putative pterin-4-alpha-carbinolamine dehydratase">
    <location>
        <begin position="1"/>
        <end position="100"/>
    </location>
</feature>
<evidence type="ECO:0000255" key="1">
    <source>
        <dbReference type="HAMAP-Rule" id="MF_00434"/>
    </source>
</evidence>
<protein>
    <recommendedName>
        <fullName evidence="1">Putative pterin-4-alpha-carbinolamine dehydratase</fullName>
        <shortName evidence="1">PHS</shortName>
        <ecNumber evidence="1">4.2.1.96</ecNumber>
    </recommendedName>
    <alternativeName>
        <fullName evidence="1">4-alpha-hydroxy-tetrahydropterin dehydratase</fullName>
    </alternativeName>
    <alternativeName>
        <fullName evidence="1">Pterin carbinolamine dehydratase</fullName>
        <shortName evidence="1">PCD</shortName>
    </alternativeName>
</protein>
<gene>
    <name type="ordered locus">Rpal_0408</name>
</gene>
<dbReference type="EC" id="4.2.1.96" evidence="1"/>
<dbReference type="EMBL" id="CP001096">
    <property type="protein sequence ID" value="ACE98968.1"/>
    <property type="molecule type" value="Genomic_DNA"/>
</dbReference>
<dbReference type="RefSeq" id="WP_012494130.1">
    <property type="nucleotide sequence ID" value="NC_011004.1"/>
</dbReference>
<dbReference type="SMR" id="B3Q9E4"/>
<dbReference type="KEGG" id="rpt:Rpal_0408"/>
<dbReference type="HOGENOM" id="CLU_081974_3_2_5"/>
<dbReference type="OrthoDB" id="9794987at2"/>
<dbReference type="Proteomes" id="UP000001725">
    <property type="component" value="Chromosome"/>
</dbReference>
<dbReference type="GO" id="GO:0008124">
    <property type="term" value="F:4-alpha-hydroxytetrahydrobiopterin dehydratase activity"/>
    <property type="evidence" value="ECO:0007669"/>
    <property type="project" value="UniProtKB-UniRule"/>
</dbReference>
<dbReference type="GO" id="GO:0006729">
    <property type="term" value="P:tetrahydrobiopterin biosynthetic process"/>
    <property type="evidence" value="ECO:0007669"/>
    <property type="project" value="InterPro"/>
</dbReference>
<dbReference type="CDD" id="cd00914">
    <property type="entry name" value="PCD_DCoH_subfamily_b"/>
    <property type="match status" value="1"/>
</dbReference>
<dbReference type="Gene3D" id="3.30.1360.20">
    <property type="entry name" value="Transcriptional coactivator/pterin dehydratase"/>
    <property type="match status" value="1"/>
</dbReference>
<dbReference type="HAMAP" id="MF_00434">
    <property type="entry name" value="Pterin_4_alpha"/>
    <property type="match status" value="1"/>
</dbReference>
<dbReference type="InterPro" id="IPR036428">
    <property type="entry name" value="PCD_sf"/>
</dbReference>
<dbReference type="InterPro" id="IPR001533">
    <property type="entry name" value="Pterin_deHydtase"/>
</dbReference>
<dbReference type="NCBIfam" id="NF002017">
    <property type="entry name" value="PRK00823.1-2"/>
    <property type="match status" value="1"/>
</dbReference>
<dbReference type="NCBIfam" id="NF002018">
    <property type="entry name" value="PRK00823.1-3"/>
    <property type="match status" value="1"/>
</dbReference>
<dbReference type="NCBIfam" id="NF002020">
    <property type="entry name" value="PRK00823.1-5"/>
    <property type="match status" value="1"/>
</dbReference>
<dbReference type="PANTHER" id="PTHR12599">
    <property type="entry name" value="PTERIN-4-ALPHA-CARBINOLAMINE DEHYDRATASE"/>
    <property type="match status" value="1"/>
</dbReference>
<dbReference type="PANTHER" id="PTHR12599:SF0">
    <property type="entry name" value="PTERIN-4-ALPHA-CARBINOLAMINE DEHYDRATASE"/>
    <property type="match status" value="1"/>
</dbReference>
<dbReference type="Pfam" id="PF01329">
    <property type="entry name" value="Pterin_4a"/>
    <property type="match status" value="1"/>
</dbReference>
<dbReference type="SUPFAM" id="SSF55248">
    <property type="entry name" value="PCD-like"/>
    <property type="match status" value="1"/>
</dbReference>